<feature type="chain" id="PRO_0000321552" description="Trafficking protein particle complex subunit 13">
    <location>
        <begin position="1"/>
        <end position="414"/>
    </location>
</feature>
<reference key="1">
    <citation type="submission" date="2004-06" db="EMBL/GenBank/DDBJ databases">
        <authorList>
            <consortium name="NIH - Xenopus Gene Collection (XGC) project"/>
        </authorList>
    </citation>
    <scope>NUCLEOTIDE SEQUENCE [LARGE SCALE MRNA]</scope>
    <source>
        <tissue>Ovary</tissue>
    </source>
</reference>
<organism>
    <name type="scientific">Xenopus laevis</name>
    <name type="common">African clawed frog</name>
    <dbReference type="NCBI Taxonomy" id="8355"/>
    <lineage>
        <taxon>Eukaryota</taxon>
        <taxon>Metazoa</taxon>
        <taxon>Chordata</taxon>
        <taxon>Craniata</taxon>
        <taxon>Vertebrata</taxon>
        <taxon>Euteleostomi</taxon>
        <taxon>Amphibia</taxon>
        <taxon>Batrachia</taxon>
        <taxon>Anura</taxon>
        <taxon>Pipoidea</taxon>
        <taxon>Pipidae</taxon>
        <taxon>Xenopodinae</taxon>
        <taxon>Xenopus</taxon>
        <taxon>Xenopus</taxon>
    </lineage>
</organism>
<proteinExistence type="evidence at transcript level"/>
<gene>
    <name type="primary">trappc13</name>
</gene>
<evidence type="ECO:0000250" key="1"/>
<evidence type="ECO:0000305" key="2"/>
<protein>
    <recommendedName>
        <fullName>Trafficking protein particle complex subunit 13</fullName>
    </recommendedName>
</protein>
<sequence>MDVNQPKQEHLLALKVMRLTKPTLFTNIPVTCEEKDLPGDLFSTLMKDDPSTVKGAEILMLGEMLTLPQNFGNIFLGETFSSYISVHNDSNQVVKDVQVKADLQTSSQRLNLSASSAVVADLKPDSCIDDVIHHEVKEIGTHILVCAVSYTIQSGEKMYFRKFFKFQVLKPLDVKTKFYNAETDEVFLEAQIQNITTSPMFMEKVSLEPSIMYNVSELNTVITNGDWKGSSTFGTKTYLQPLDTRQYLYCLKPKPEFAEKAGVIKGVTVIGKLDIVWKTNLGERGRLQTSQLQRMAPGYGDVRLSIETIPDTVRLEEPFDITCKITNCSSERTMDLVLEMCNTNAIHWSGVSGRQLGKLHPSSSLHLTLTLLSSVQGLQSVSGLRLTDTFLKRTYEYDDIAQVCVVSSKLQAES</sequence>
<keyword id="KW-1185">Reference proteome</keyword>
<dbReference type="EMBL" id="BC073045">
    <property type="protein sequence ID" value="AAH73045.1"/>
    <property type="status" value="ALT_INIT"/>
    <property type="molecule type" value="mRNA"/>
</dbReference>
<dbReference type="RefSeq" id="NP_001085628.2">
    <property type="nucleotide sequence ID" value="NM_001092159.1"/>
</dbReference>
<dbReference type="DNASU" id="444054"/>
<dbReference type="GeneID" id="444054"/>
<dbReference type="KEGG" id="xla:444054"/>
<dbReference type="AGR" id="Xenbase:XB-GENE-5802809"/>
<dbReference type="CTD" id="444054"/>
<dbReference type="Xenbase" id="XB-GENE-5802809">
    <property type="gene designation" value="trappc13.L"/>
</dbReference>
<dbReference type="OMA" id="YCIKPKP"/>
<dbReference type="OrthoDB" id="10250284at2759"/>
<dbReference type="Proteomes" id="UP000186698">
    <property type="component" value="Chromosome 1L"/>
</dbReference>
<dbReference type="Bgee" id="444054">
    <property type="expression patterns" value="Expressed in egg cell and 19 other cell types or tissues"/>
</dbReference>
<dbReference type="GO" id="GO:1990072">
    <property type="term" value="C:TRAPPIII protein complex"/>
    <property type="evidence" value="ECO:0000318"/>
    <property type="project" value="GO_Central"/>
</dbReference>
<dbReference type="InterPro" id="IPR010378">
    <property type="entry name" value="TRAPPC13"/>
</dbReference>
<dbReference type="InterPro" id="IPR055428">
    <property type="entry name" value="TRAPPC13_C"/>
</dbReference>
<dbReference type="InterPro" id="IPR055429">
    <property type="entry name" value="TRAPPC13_M"/>
</dbReference>
<dbReference type="InterPro" id="IPR055427">
    <property type="entry name" value="TRAPPC13_N"/>
</dbReference>
<dbReference type="PANTHER" id="PTHR13134">
    <property type="entry name" value="TRAFFICKING PROTEIN PARTICLE COMPLEX SUBUNIT 13"/>
    <property type="match status" value="1"/>
</dbReference>
<dbReference type="PANTHER" id="PTHR13134:SF3">
    <property type="entry name" value="TRAFFICKING PROTEIN PARTICLE COMPLEX SUBUNIT 13"/>
    <property type="match status" value="1"/>
</dbReference>
<dbReference type="Pfam" id="PF23643">
    <property type="entry name" value="TRAPPC13_C"/>
    <property type="match status" value="1"/>
</dbReference>
<dbReference type="Pfam" id="PF23647">
    <property type="entry name" value="TRAPPC13_M"/>
    <property type="match status" value="1"/>
</dbReference>
<dbReference type="Pfam" id="PF06159">
    <property type="entry name" value="TRAPPC13_N"/>
    <property type="match status" value="1"/>
</dbReference>
<name>TPC13_XENLA</name>
<comment type="subunit">
    <text evidence="1">Part of the multisubunit TRAPP (transport protein particle) complex.</text>
</comment>
<comment type="similarity">
    <text evidence="2">Belongs to the TRAPPC13 family.</text>
</comment>
<comment type="sequence caution" evidence="2">
    <conflict type="erroneous initiation">
        <sequence resource="EMBL-CDS" id="AAH73045"/>
    </conflict>
    <text>Truncated N-terminus.</text>
</comment>
<accession>Q6GPR5</accession>